<comment type="function">
    <text evidence="1">The RuvA-RuvB-RuvC complex processes Holliday junction (HJ) DNA during genetic recombination and DNA repair. Endonuclease that resolves HJ intermediates. Cleaves cruciform DNA by making single-stranded nicks across the HJ at symmetrical positions within the homologous arms, yielding a 5'-phosphate and a 3'-hydroxyl group; requires a central core of homology in the junction. The consensus cleavage sequence is 5'-(A/T)TT(C/G)-3'. Cleavage occurs on the 3'-side of the TT dinucleotide at the point of strand exchange. HJ branch migration catalyzed by RuvA-RuvB allows RuvC to scan DNA until it finds its consensus sequence, where it cleaves and resolves the cruciform DNA.</text>
</comment>
<comment type="catalytic activity">
    <reaction evidence="1">
        <text>Endonucleolytic cleavage at a junction such as a reciprocal single-stranded crossover between two homologous DNA duplexes (Holliday junction).</text>
        <dbReference type="EC" id="3.1.21.10"/>
    </reaction>
</comment>
<comment type="cofactor">
    <cofactor evidence="1">
        <name>Mg(2+)</name>
        <dbReference type="ChEBI" id="CHEBI:18420"/>
    </cofactor>
    <text evidence="1">Binds 2 Mg(2+) ion per subunit.</text>
</comment>
<comment type="subunit">
    <text evidence="1">Homodimer which binds Holliday junction (HJ) DNA. The HJ becomes 2-fold symmetrical on binding to RuvC with unstacked arms; it has a different conformation from HJ DNA in complex with RuvA. In the full resolvosome a probable DNA-RuvA(4)-RuvB(12)-RuvC(2) complex forms which resolves the HJ.</text>
</comment>
<comment type="subcellular location">
    <subcellularLocation>
        <location evidence="1">Cytoplasm</location>
    </subcellularLocation>
</comment>
<comment type="similarity">
    <text evidence="1">Belongs to the RuvC family.</text>
</comment>
<sequence>MRILGIDPGIAIVGFGVVDKEGSQLRPVQYGSIQTEAGLPVPLRLKQIFEAMQSLLETYRPDEMSVEKLFFNKNVTTAFTVGQARGVIILAAELAGVPVYEYTPMQVKQAVTGYGGAEKKQIQEMTKLLLRLKEVPKPDDVADALGIAITHAQFRAFISISEGVKK</sequence>
<dbReference type="EC" id="3.1.21.10" evidence="1"/>
<dbReference type="EMBL" id="AP008955">
    <property type="protein sequence ID" value="BAH42841.1"/>
    <property type="molecule type" value="Genomic_DNA"/>
</dbReference>
<dbReference type="RefSeq" id="WP_012685580.1">
    <property type="nucleotide sequence ID" value="NC_012491.1"/>
</dbReference>
<dbReference type="SMR" id="C0ZAN2"/>
<dbReference type="STRING" id="358681.BBR47_18640"/>
<dbReference type="KEGG" id="bbe:BBR47_18640"/>
<dbReference type="eggNOG" id="COG0817">
    <property type="taxonomic scope" value="Bacteria"/>
</dbReference>
<dbReference type="HOGENOM" id="CLU_091257_3_1_9"/>
<dbReference type="Proteomes" id="UP000001877">
    <property type="component" value="Chromosome"/>
</dbReference>
<dbReference type="GO" id="GO:0005737">
    <property type="term" value="C:cytoplasm"/>
    <property type="evidence" value="ECO:0007669"/>
    <property type="project" value="UniProtKB-SubCell"/>
</dbReference>
<dbReference type="GO" id="GO:0048476">
    <property type="term" value="C:Holliday junction resolvase complex"/>
    <property type="evidence" value="ECO:0007669"/>
    <property type="project" value="UniProtKB-UniRule"/>
</dbReference>
<dbReference type="GO" id="GO:0008821">
    <property type="term" value="F:crossover junction DNA endonuclease activity"/>
    <property type="evidence" value="ECO:0007669"/>
    <property type="project" value="UniProtKB-UniRule"/>
</dbReference>
<dbReference type="GO" id="GO:0003677">
    <property type="term" value="F:DNA binding"/>
    <property type="evidence" value="ECO:0007669"/>
    <property type="project" value="UniProtKB-KW"/>
</dbReference>
<dbReference type="GO" id="GO:0000287">
    <property type="term" value="F:magnesium ion binding"/>
    <property type="evidence" value="ECO:0007669"/>
    <property type="project" value="UniProtKB-UniRule"/>
</dbReference>
<dbReference type="GO" id="GO:0006310">
    <property type="term" value="P:DNA recombination"/>
    <property type="evidence" value="ECO:0007669"/>
    <property type="project" value="UniProtKB-UniRule"/>
</dbReference>
<dbReference type="GO" id="GO:0006281">
    <property type="term" value="P:DNA repair"/>
    <property type="evidence" value="ECO:0007669"/>
    <property type="project" value="UniProtKB-UniRule"/>
</dbReference>
<dbReference type="CDD" id="cd16962">
    <property type="entry name" value="RuvC"/>
    <property type="match status" value="1"/>
</dbReference>
<dbReference type="FunFam" id="3.30.420.10:FF:000002">
    <property type="entry name" value="Crossover junction endodeoxyribonuclease RuvC"/>
    <property type="match status" value="1"/>
</dbReference>
<dbReference type="Gene3D" id="3.30.420.10">
    <property type="entry name" value="Ribonuclease H-like superfamily/Ribonuclease H"/>
    <property type="match status" value="1"/>
</dbReference>
<dbReference type="HAMAP" id="MF_00034">
    <property type="entry name" value="RuvC"/>
    <property type="match status" value="1"/>
</dbReference>
<dbReference type="InterPro" id="IPR012337">
    <property type="entry name" value="RNaseH-like_sf"/>
</dbReference>
<dbReference type="InterPro" id="IPR036397">
    <property type="entry name" value="RNaseH_sf"/>
</dbReference>
<dbReference type="InterPro" id="IPR020563">
    <property type="entry name" value="X-over_junc_endoDNase_Mg_BS"/>
</dbReference>
<dbReference type="InterPro" id="IPR002176">
    <property type="entry name" value="X-over_junc_endoDNase_RuvC"/>
</dbReference>
<dbReference type="NCBIfam" id="NF000711">
    <property type="entry name" value="PRK00039.2-1"/>
    <property type="match status" value="1"/>
</dbReference>
<dbReference type="NCBIfam" id="TIGR00228">
    <property type="entry name" value="ruvC"/>
    <property type="match status" value="1"/>
</dbReference>
<dbReference type="PANTHER" id="PTHR30194">
    <property type="entry name" value="CROSSOVER JUNCTION ENDODEOXYRIBONUCLEASE RUVC"/>
    <property type="match status" value="1"/>
</dbReference>
<dbReference type="PANTHER" id="PTHR30194:SF3">
    <property type="entry name" value="CROSSOVER JUNCTION ENDODEOXYRIBONUCLEASE RUVC"/>
    <property type="match status" value="1"/>
</dbReference>
<dbReference type="Pfam" id="PF02075">
    <property type="entry name" value="RuvC"/>
    <property type="match status" value="1"/>
</dbReference>
<dbReference type="PRINTS" id="PR00696">
    <property type="entry name" value="RSOLVASERUVC"/>
</dbReference>
<dbReference type="SUPFAM" id="SSF53098">
    <property type="entry name" value="Ribonuclease H-like"/>
    <property type="match status" value="1"/>
</dbReference>
<dbReference type="PROSITE" id="PS01321">
    <property type="entry name" value="RUVC"/>
    <property type="match status" value="1"/>
</dbReference>
<name>RUVC_BREBN</name>
<feature type="chain" id="PRO_1000195240" description="Crossover junction endodeoxyribonuclease RuvC">
    <location>
        <begin position="1"/>
        <end position="166"/>
    </location>
</feature>
<feature type="active site" evidence="1">
    <location>
        <position position="7"/>
    </location>
</feature>
<feature type="active site" evidence="1">
    <location>
        <position position="67"/>
    </location>
</feature>
<feature type="active site" evidence="1">
    <location>
        <position position="140"/>
    </location>
</feature>
<feature type="binding site" evidence="1">
    <location>
        <position position="7"/>
    </location>
    <ligand>
        <name>Mg(2+)</name>
        <dbReference type="ChEBI" id="CHEBI:18420"/>
        <label>1</label>
    </ligand>
</feature>
<feature type="binding site" evidence="1">
    <location>
        <position position="67"/>
    </location>
    <ligand>
        <name>Mg(2+)</name>
        <dbReference type="ChEBI" id="CHEBI:18420"/>
        <label>2</label>
    </ligand>
</feature>
<feature type="binding site" evidence="1">
    <location>
        <position position="140"/>
    </location>
    <ligand>
        <name>Mg(2+)</name>
        <dbReference type="ChEBI" id="CHEBI:18420"/>
        <label>1</label>
    </ligand>
</feature>
<organism>
    <name type="scientific">Brevibacillus brevis (strain 47 / JCM 6285 / NBRC 100599)</name>
    <dbReference type="NCBI Taxonomy" id="358681"/>
    <lineage>
        <taxon>Bacteria</taxon>
        <taxon>Bacillati</taxon>
        <taxon>Bacillota</taxon>
        <taxon>Bacilli</taxon>
        <taxon>Bacillales</taxon>
        <taxon>Paenibacillaceae</taxon>
        <taxon>Brevibacillus</taxon>
    </lineage>
</organism>
<keyword id="KW-0963">Cytoplasm</keyword>
<keyword id="KW-0227">DNA damage</keyword>
<keyword id="KW-0233">DNA recombination</keyword>
<keyword id="KW-0234">DNA repair</keyword>
<keyword id="KW-0238">DNA-binding</keyword>
<keyword id="KW-0255">Endonuclease</keyword>
<keyword id="KW-0378">Hydrolase</keyword>
<keyword id="KW-0460">Magnesium</keyword>
<keyword id="KW-0479">Metal-binding</keyword>
<keyword id="KW-0540">Nuclease</keyword>
<keyword id="KW-1185">Reference proteome</keyword>
<reference key="1">
    <citation type="submission" date="2005-03" db="EMBL/GenBank/DDBJ databases">
        <title>Brevibacillus brevis strain 47, complete genome.</title>
        <authorList>
            <person name="Hosoyama A."/>
            <person name="Yamada R."/>
            <person name="Hongo Y."/>
            <person name="Terui Y."/>
            <person name="Ankai A."/>
            <person name="Masuyama W."/>
            <person name="Sekiguchi M."/>
            <person name="Takeda T."/>
            <person name="Asano K."/>
            <person name="Ohji S."/>
            <person name="Ichikawa N."/>
            <person name="Narita S."/>
            <person name="Aoki N."/>
            <person name="Miura H."/>
            <person name="Matsushita S."/>
            <person name="Sekigawa T."/>
            <person name="Yamagata H."/>
            <person name="Yoshikawa H."/>
            <person name="Udaka S."/>
            <person name="Tanikawa S."/>
            <person name="Fujita N."/>
        </authorList>
    </citation>
    <scope>NUCLEOTIDE SEQUENCE [LARGE SCALE GENOMIC DNA]</scope>
    <source>
        <strain>47 / JCM 6285 / NBRC 100599</strain>
    </source>
</reference>
<proteinExistence type="inferred from homology"/>
<gene>
    <name evidence="1" type="primary">ruvC</name>
    <name type="ordered locus">BBR47_18640</name>
</gene>
<evidence type="ECO:0000255" key="1">
    <source>
        <dbReference type="HAMAP-Rule" id="MF_00034"/>
    </source>
</evidence>
<accession>C0ZAN2</accession>
<protein>
    <recommendedName>
        <fullName evidence="1">Crossover junction endodeoxyribonuclease RuvC</fullName>
        <ecNumber evidence="1">3.1.21.10</ecNumber>
    </recommendedName>
    <alternativeName>
        <fullName evidence="1">Holliday junction nuclease RuvC</fullName>
    </alternativeName>
    <alternativeName>
        <fullName evidence="1">Holliday junction resolvase RuvC</fullName>
    </alternativeName>
</protein>